<accession>P79169</accession>
<keyword id="KW-0025">Alternative splicing</keyword>
<keyword id="KW-0130">Cell adhesion</keyword>
<keyword id="KW-1003">Cell membrane</keyword>
<keyword id="KW-0966">Cell projection</keyword>
<keyword id="KW-0963">Cytoplasm</keyword>
<keyword id="KW-0206">Cytoskeleton</keyword>
<keyword id="KW-1015">Disulfide bond</keyword>
<keyword id="KW-0325">Glycoprotein</keyword>
<keyword id="KW-0339">Growth factor</keyword>
<keyword id="KW-0472">Membrane</keyword>
<keyword id="KW-1185">Reference proteome</keyword>
<keyword id="KW-0964">Secreted</keyword>
<keyword id="KW-0732">Signal</keyword>
<keyword id="KW-0812">Transmembrane</keyword>
<keyword id="KW-1133">Transmembrane helix</keyword>
<sequence length="274" mass="30988">MKKTQTWIVTCIYLQLLLFNPLVKTKGLCRNRVTDDVKDVTKLVANLPKDYKIALKYVPGMDVLPSHCWISVMVEQLSVSLTDLLDKFSNISEGLSNYSIIDKLVKIVDDLVECVEGHSSENVKKSSKSPEPRLFTPEEFFRIFNRSIDAFKDLEMVASKTSECVVSSTLSPEKDSRVSVTKPFMLPPVAASSLRNDSSSSNRKATNPIEDSSIQWAVMALPACFSLVIGFAFGAFYWKKKQPNLTRTVENIQINEEDNEISMLQEKEREFQEV</sequence>
<protein>
    <recommendedName>
        <fullName>Kit ligand</fullName>
    </recommendedName>
    <alternativeName>
        <fullName>Mast cell growth factor</fullName>
        <shortName>MGF</shortName>
    </alternativeName>
    <alternativeName>
        <fullName>Stem cell factor</fullName>
        <shortName>SCF</shortName>
    </alternativeName>
    <alternativeName>
        <fullName>c-Kit ligand</fullName>
    </alternativeName>
    <component>
        <recommendedName>
            <fullName>Soluble KIT ligand</fullName>
            <shortName>sKITLG</shortName>
        </recommendedName>
    </component>
</protein>
<name>SCF_FELCA</name>
<comment type="function">
    <text evidence="1">Stimulates the proliferation of mast cells. Able to augment the proliferation of both myeloid and lymphoid hematopoietic progenitors in bone marrow culture. Also mediates cell-cell adhesion. Acts synergistically with other cytokines, probably interleukins (By similarity).</text>
</comment>
<comment type="subunit">
    <text evidence="5">Homodimer, non-covalently linked.</text>
</comment>
<comment type="subcellular location">
    <molecule>Isoform 1</molecule>
    <subcellularLocation>
        <location evidence="1">Cell membrane</location>
        <topology evidence="1">Single-pass type I membrane protein</topology>
    </subcellularLocation>
    <subcellularLocation>
        <location evidence="1">Secreted</location>
    </subcellularLocation>
    <text evidence="1">Also exists as a secreted soluble form (isoform 1 only).</text>
</comment>
<comment type="subcellular location">
    <molecule>Isoform 2</molecule>
    <subcellularLocation>
        <location evidence="2">Cytoplasm</location>
    </subcellularLocation>
    <subcellularLocation>
        <location evidence="1">Cytoplasm</location>
        <location evidence="1">Cytoskeleton</location>
    </subcellularLocation>
    <subcellularLocation>
        <location evidence="2">Cell membrane</location>
        <topology evidence="1">Single-pass type I membrane protein</topology>
    </subcellularLocation>
    <subcellularLocation>
        <location evidence="2">Cell projection</location>
        <location evidence="2">Lamellipodium</location>
    </subcellularLocation>
    <subcellularLocation>
        <location evidence="2">Cell projection</location>
        <location evidence="2">Filopodium</location>
    </subcellularLocation>
</comment>
<comment type="subcellular location">
    <molecule>Soluble KIT ligand</molecule>
    <subcellularLocation>
        <location evidence="1">Secreted</location>
    </subcellularLocation>
</comment>
<comment type="alternative products">
    <event type="alternative splicing"/>
    <isoform>
        <id>P79169-1</id>
        <name>1</name>
        <sequence type="displayed"/>
    </isoform>
    <isoform>
        <id>P79169-2</id>
        <name>2</name>
        <sequence type="described" ref="VSP_006021"/>
    </isoform>
</comment>
<comment type="PTM">
    <text evidence="1">A soluble form is produced by proteolytic processing of isoform 1 in the extracellular domain.</text>
</comment>
<comment type="similarity">
    <text evidence="5">Belongs to the SCF family.</text>
</comment>
<reference key="1">
    <citation type="journal article" date="1996" name="DNA Seq.">
        <title>The cloning and sequencing of cDNAs encoding two isoforms of feline stem cell factor.</title>
        <authorList>
            <person name="Dunham S.P."/>
            <person name="Onions D.E."/>
        </authorList>
    </citation>
    <scope>NUCLEOTIDE SEQUENCE [MRNA] (ISOFORMS 1 AND 2)</scope>
</reference>
<feature type="signal peptide" evidence="3">
    <location>
        <begin position="1"/>
        <end position="25"/>
    </location>
</feature>
<feature type="chain" id="PRO_0000031911" description="Kit ligand">
    <location>
        <begin position="26"/>
        <end position="274"/>
    </location>
</feature>
<feature type="chain" id="PRO_0000403389" description="Soluble KIT ligand" evidence="1">
    <location>
        <begin position="26"/>
        <end position="191"/>
    </location>
</feature>
<feature type="topological domain" description="Extracellular" evidence="3">
    <location>
        <begin position="26"/>
        <end position="215"/>
    </location>
</feature>
<feature type="transmembrane region" description="Helical" evidence="3">
    <location>
        <begin position="216"/>
        <end position="238"/>
    </location>
</feature>
<feature type="topological domain" description="Cytoplasmic" evidence="3">
    <location>
        <begin position="239"/>
        <end position="274"/>
    </location>
</feature>
<feature type="glycosylation site" description="N-linked (GlcNAc...) asparagine" evidence="3">
    <location>
        <position position="90"/>
    </location>
</feature>
<feature type="glycosylation site" description="N-linked (GlcNAc...) asparagine" evidence="3">
    <location>
        <position position="97"/>
    </location>
</feature>
<feature type="glycosylation site" description="N-linked (GlcNAc...) asparagine" evidence="3">
    <location>
        <position position="145"/>
    </location>
</feature>
<feature type="glycosylation site" description="N-linked (GlcNAc...) asparagine" evidence="3">
    <location>
        <position position="196"/>
    </location>
</feature>
<feature type="disulfide bond" evidence="1">
    <location>
        <begin position="29"/>
        <end position="114"/>
    </location>
</feature>
<feature type="disulfide bond" evidence="1">
    <location>
        <begin position="68"/>
        <end position="164"/>
    </location>
</feature>
<feature type="splice variant" id="VSP_006021" description="In isoform 2." evidence="4">
    <original>DSRVSVTKPFMLPPVAASSLRNDSSSSNR</original>
    <variation>G</variation>
    <location>
        <begin position="175"/>
        <end position="203"/>
    </location>
</feature>
<proteinExistence type="evidence at transcript level"/>
<organism>
    <name type="scientific">Felis catus</name>
    <name type="common">Cat</name>
    <name type="synonym">Felis silvestris catus</name>
    <dbReference type="NCBI Taxonomy" id="9685"/>
    <lineage>
        <taxon>Eukaryota</taxon>
        <taxon>Metazoa</taxon>
        <taxon>Chordata</taxon>
        <taxon>Craniata</taxon>
        <taxon>Vertebrata</taxon>
        <taxon>Euteleostomi</taxon>
        <taxon>Mammalia</taxon>
        <taxon>Eutheria</taxon>
        <taxon>Laurasiatheria</taxon>
        <taxon>Carnivora</taxon>
        <taxon>Feliformia</taxon>
        <taxon>Felidae</taxon>
        <taxon>Felinae</taxon>
        <taxon>Felis</taxon>
    </lineage>
</organism>
<evidence type="ECO:0000250" key="1"/>
<evidence type="ECO:0000250" key="2">
    <source>
        <dbReference type="UniProtKB" id="P21583"/>
    </source>
</evidence>
<evidence type="ECO:0000255" key="3"/>
<evidence type="ECO:0000303" key="4">
    <source>
    </source>
</evidence>
<evidence type="ECO:0000305" key="5"/>
<gene>
    <name type="primary">KITLG</name>
    <name type="synonym">SCF</name>
</gene>
<dbReference type="EMBL" id="D50833">
    <property type="protein sequence ID" value="BAA09445.1"/>
    <property type="molecule type" value="mRNA"/>
</dbReference>
<dbReference type="RefSeq" id="NP_001009343.1">
    <molecule id="P79169-1"/>
    <property type="nucleotide sequence ID" value="NM_001009343.1"/>
</dbReference>
<dbReference type="SMR" id="P79169"/>
<dbReference type="FunCoup" id="P79169">
    <property type="interactions" value="94"/>
</dbReference>
<dbReference type="STRING" id="9685.ENSFCAP00000060137"/>
<dbReference type="GlyCosmos" id="P79169">
    <property type="glycosylation" value="4 sites, No reported glycans"/>
</dbReference>
<dbReference type="PaxDb" id="9685-ENSFCAP00000020444"/>
<dbReference type="GeneID" id="493937"/>
<dbReference type="KEGG" id="fca:493937"/>
<dbReference type="CTD" id="4254"/>
<dbReference type="eggNOG" id="ENOG502QTGT">
    <property type="taxonomic scope" value="Eukaryota"/>
</dbReference>
<dbReference type="InParanoid" id="P79169"/>
<dbReference type="OrthoDB" id="8445223at2759"/>
<dbReference type="Proteomes" id="UP000011712">
    <property type="component" value="Unplaced"/>
</dbReference>
<dbReference type="GO" id="GO:0005737">
    <property type="term" value="C:cytoplasm"/>
    <property type="evidence" value="ECO:0000250"/>
    <property type="project" value="UniProtKB"/>
</dbReference>
<dbReference type="GO" id="GO:0005856">
    <property type="term" value="C:cytoskeleton"/>
    <property type="evidence" value="ECO:0007669"/>
    <property type="project" value="UniProtKB-SubCell"/>
</dbReference>
<dbReference type="GO" id="GO:0005576">
    <property type="term" value="C:extracellular region"/>
    <property type="evidence" value="ECO:0007669"/>
    <property type="project" value="UniProtKB-SubCell"/>
</dbReference>
<dbReference type="GO" id="GO:0030175">
    <property type="term" value="C:filopodium"/>
    <property type="evidence" value="ECO:0000250"/>
    <property type="project" value="UniProtKB"/>
</dbReference>
<dbReference type="GO" id="GO:0030027">
    <property type="term" value="C:lamellipodium"/>
    <property type="evidence" value="ECO:0000250"/>
    <property type="project" value="UniProtKB"/>
</dbReference>
<dbReference type="GO" id="GO:0005886">
    <property type="term" value="C:plasma membrane"/>
    <property type="evidence" value="ECO:0000250"/>
    <property type="project" value="UniProtKB"/>
</dbReference>
<dbReference type="GO" id="GO:0005125">
    <property type="term" value="F:cytokine activity"/>
    <property type="evidence" value="ECO:0000318"/>
    <property type="project" value="GO_Central"/>
</dbReference>
<dbReference type="GO" id="GO:0008083">
    <property type="term" value="F:growth factor activity"/>
    <property type="evidence" value="ECO:0007669"/>
    <property type="project" value="UniProtKB-KW"/>
</dbReference>
<dbReference type="GO" id="GO:0005173">
    <property type="term" value="F:stem cell factor receptor binding"/>
    <property type="evidence" value="ECO:0000318"/>
    <property type="project" value="GO_Central"/>
</dbReference>
<dbReference type="GO" id="GO:0007155">
    <property type="term" value="P:cell adhesion"/>
    <property type="evidence" value="ECO:0007669"/>
    <property type="project" value="UniProtKB-KW"/>
</dbReference>
<dbReference type="GO" id="GO:0008284">
    <property type="term" value="P:positive regulation of cell population proliferation"/>
    <property type="evidence" value="ECO:0000318"/>
    <property type="project" value="GO_Central"/>
</dbReference>
<dbReference type="FunFam" id="1.20.1250.10:FF:000004">
    <property type="entry name" value="Kit ligand"/>
    <property type="match status" value="1"/>
</dbReference>
<dbReference type="Gene3D" id="1.20.1250.10">
    <property type="match status" value="1"/>
</dbReference>
<dbReference type="InterPro" id="IPR009079">
    <property type="entry name" value="4_helix_cytokine-like_core"/>
</dbReference>
<dbReference type="InterPro" id="IPR003452">
    <property type="entry name" value="SCF"/>
</dbReference>
<dbReference type="PANTHER" id="PTHR11574">
    <property type="entry name" value="KIT LIGAND"/>
    <property type="match status" value="1"/>
</dbReference>
<dbReference type="PANTHER" id="PTHR11574:SF0">
    <property type="entry name" value="KIT LIGAND"/>
    <property type="match status" value="1"/>
</dbReference>
<dbReference type="Pfam" id="PF02404">
    <property type="entry name" value="SCF"/>
    <property type="match status" value="1"/>
</dbReference>
<dbReference type="PIRSF" id="PIRSF015599">
    <property type="entry name" value="SCF"/>
    <property type="match status" value="1"/>
</dbReference>
<dbReference type="SUPFAM" id="SSF47266">
    <property type="entry name" value="4-helical cytokines"/>
    <property type="match status" value="1"/>
</dbReference>